<sequence length="153" mass="17363">MNVGVAHSEVNPNTRVMNSRGIWLAYIILVGLLHMVLLSIPFFSIPVVWTLTNVIHNLATYVFLHTVKGTPFETPDQGKARLLTHWEQMDYGLQFTSSRKFLSISPIVLYLLASFYTKYDAAHFLINTASLLSVLLPKLPQFHGVRVFGINKY</sequence>
<name>ORML2_HUMAN</name>
<comment type="function">
    <text evidence="1 4">Plays an essential role in the homeostatic regulation of sphingolipid de novo biosynthesis by modulating the activity of the serine palmitoyltransferase (SPT) in response to ceramide levels (PubMed:20182505). When complexed to SPT, the binding of ceramides to its N-terminus stabilizes a conformation that block SPT substrate entry, hence preventing SPT catalytic activity. Through this mechanism, maintains ceramide levels at sufficient concentrations for the production of complex sphingolipids, but which prevents the accumulation of ceramides to levels that trigger apoptosis (By similarity).</text>
</comment>
<comment type="subunit">
    <text evidence="4">Ceramide-sensitive subunit of the serine palmitoyltransferase (SPT) complex, which is also composed of SPTLC1, SPTLC2/3 and SPTSSA/B.</text>
</comment>
<comment type="interaction">
    <interactant intactId="EBI-11075081">
        <id>Q53FV1</id>
    </interactant>
    <interactant intactId="EBI-13059134">
        <id>Q13520</id>
        <label>AQP6</label>
    </interactant>
    <organismsDiffer>false</organismsDiffer>
    <experiments>3</experiments>
</comment>
<comment type="interaction">
    <interactant intactId="EBI-11075081">
        <id>Q53FV1</id>
    </interactant>
    <interactant intactId="EBI-7797864">
        <id>P11912</id>
        <label>CD79A</label>
    </interactant>
    <organismsDiffer>false</organismsDiffer>
    <experiments>3</experiments>
</comment>
<comment type="interaction">
    <interactant intactId="EBI-11075081">
        <id>Q53FV1</id>
    </interactant>
    <interactant intactId="EBI-6942903">
        <id>Q96BA8</id>
        <label>CREB3L1</label>
    </interactant>
    <organismsDiffer>false</organismsDiffer>
    <experiments>3</experiments>
</comment>
<comment type="interaction">
    <interactant intactId="EBI-11075081">
        <id>Q53FV1</id>
    </interactant>
    <interactant intactId="EBI-8646596">
        <id>P49447</id>
        <label>CYB561</label>
    </interactant>
    <organismsDiffer>false</organismsDiffer>
    <experiments>3</experiments>
</comment>
<comment type="interaction">
    <interactant intactId="EBI-11075081">
        <id>Q53FV1</id>
    </interactant>
    <interactant intactId="EBI-1046040">
        <id>P00387</id>
        <label>CYB5R3</label>
    </interactant>
    <organismsDiffer>false</organismsDiffer>
    <experiments>3</experiments>
</comment>
<comment type="interaction">
    <interactant intactId="EBI-11075081">
        <id>Q53FV1</id>
    </interactant>
    <interactant intactId="EBI-3915253">
        <id>Q15125</id>
        <label>EBP</label>
    </interactant>
    <organismsDiffer>false</organismsDiffer>
    <experiments>3</experiments>
</comment>
<comment type="interaction">
    <interactant intactId="EBI-11075081">
        <id>Q53FV1</id>
    </interactant>
    <interactant intactId="EBI-18535450">
        <id>Q9GZR5</id>
        <label>ELOVL4</label>
    </interactant>
    <organismsDiffer>false</organismsDiffer>
    <experiments>3</experiments>
</comment>
<comment type="interaction">
    <interactant intactId="EBI-11075081">
        <id>Q53FV1</id>
    </interactant>
    <interactant intactId="EBI-18938272">
        <id>Q96KR6</id>
        <label>FAM210B</label>
    </interactant>
    <organismsDiffer>false</organismsDiffer>
    <experiments>3</experiments>
</comment>
<comment type="interaction">
    <interactant intactId="EBI-11075081">
        <id>Q53FV1</id>
    </interactant>
    <interactant intactId="EBI-17458373">
        <id>P48165</id>
        <label>GJA8</label>
    </interactant>
    <organismsDiffer>false</organismsDiffer>
    <experiments>3</experiments>
</comment>
<comment type="interaction">
    <interactant intactId="EBI-11075081">
        <id>Q53FV1</id>
    </interactant>
    <interactant intactId="EBI-12017638">
        <id>P48051</id>
        <label>KCNJ6</label>
    </interactant>
    <organismsDiffer>false</organismsDiffer>
    <experiments>3</experiments>
</comment>
<comment type="interaction">
    <interactant intactId="EBI-11075081">
        <id>Q53FV1</id>
    </interactant>
    <interactant intactId="EBI-6163737">
        <id>Q8N4V1</id>
        <label>MMGT1</label>
    </interactant>
    <organismsDiffer>false</organismsDiffer>
    <experiments>3</experiments>
</comment>
<comment type="interaction">
    <interactant intactId="EBI-11075081">
        <id>Q53FV1</id>
    </interactant>
    <interactant intactId="EBI-10192441">
        <id>Q86VR2</id>
        <label>RETREG3</label>
    </interactant>
    <organismsDiffer>false</organismsDiffer>
    <experiments>3</experiments>
</comment>
<comment type="interaction">
    <interactant intactId="EBI-11075081">
        <id>Q53FV1</id>
    </interactant>
    <interactant intactId="EBI-17247926">
        <id>Q9NY72</id>
        <label>SCN3B</label>
    </interactant>
    <organismsDiffer>false</organismsDiffer>
    <experiments>3</experiments>
</comment>
<comment type="interaction">
    <interactant intactId="EBI-11075081">
        <id>Q53FV1</id>
    </interactant>
    <interactant intactId="EBI-3923031">
        <id>Q14973</id>
        <label>SLC10A1</label>
    </interactant>
    <organismsDiffer>false</organismsDiffer>
    <experiments>3</experiments>
</comment>
<comment type="interaction">
    <interactant intactId="EBI-11075081">
        <id>Q53FV1</id>
    </interactant>
    <interactant intactId="EBI-727322">
        <id>Q9BXJ8</id>
        <label>TMEM120A</label>
    </interactant>
    <organismsDiffer>false</organismsDiffer>
    <experiments>3</experiments>
</comment>
<comment type="interaction">
    <interactant intactId="EBI-11075081">
        <id>Q53FV1</id>
    </interactant>
    <interactant intactId="EBI-2548832">
        <id>Q8N661</id>
        <label>TMEM86B</label>
    </interactant>
    <organismsDiffer>false</organismsDiffer>
    <experiments>3</experiments>
</comment>
<comment type="interaction">
    <interactant intactId="EBI-11075081">
        <id>Q53FV1</id>
    </interactant>
    <interactant intactId="EBI-6447886">
        <id>Q9Y320</id>
        <label>TMX2</label>
    </interactant>
    <organismsDiffer>false</organismsDiffer>
    <experiments>3</experiments>
</comment>
<comment type="interaction">
    <interactant intactId="EBI-11075081">
        <id>Q53FV1</id>
    </interactant>
    <interactant intactId="EBI-12837904">
        <id>Q96MV8</id>
        <label>ZDHHC15</label>
    </interactant>
    <organismsDiffer>false</organismsDiffer>
    <experiments>3</experiments>
</comment>
<comment type="subcellular location">
    <subcellularLocation>
        <location evidence="3">Endoplasmic reticulum membrane</location>
        <topology evidence="3">Multi-pass membrane protein</topology>
    </subcellularLocation>
</comment>
<comment type="tissue specificity">
    <text evidence="3">Widely expressed. Expressed in adult and fetal heart, brain, lung, liver, skeletal muscle and kidney. Expressed in adult pancreas and placenta and in fetal spleen abd thymus.</text>
</comment>
<comment type="domain">
    <text evidence="1">Ceramides bind to ORMDL3 N-terminus and stabilize it in a conformation that physically restricts the accessibility of the substrates to their binding sites in the serine palmitoyltransferase (SPT) complex, hence inhibiting SPT catalytic activity. In the absence of ceramides, the N-terminus is flexible and permits substrate binding, thus liberating SPT from inhibition.</text>
</comment>
<comment type="similarity">
    <text evidence="5">Belongs to the ORM family.</text>
</comment>
<gene>
    <name type="primary">ORMDL2</name>
    <name type="ORF">HSPC160</name>
    <name type="ORF">MSTP095</name>
</gene>
<accession>Q53FV1</accession>
<accession>B2RA58</accession>
<accession>Q7Z4E5</accession>
<accession>Q8NFX0</accession>
<accession>Q9P004</accession>
<reference key="1">
    <citation type="journal article" date="2002" name="Genome Biol.">
        <title>ORMDL proteins are a conserved new family of endoplasmic reticulum membrane proteins.</title>
        <authorList>
            <person name="Hjelmqvist L."/>
            <person name="Tuson M."/>
            <person name="Marfany G."/>
            <person name="Herrero E."/>
            <person name="Balcells S."/>
            <person name="Gonzalez-Duarte R."/>
        </authorList>
    </citation>
    <scope>NUCLEOTIDE SEQUENCE [MRNA]</scope>
    <scope>SUBCELLULAR LOCATION</scope>
    <scope>TISSUE SPECIFICITY</scope>
</reference>
<reference key="2">
    <citation type="journal article" date="2008" name="FASEB J.">
        <title>A family of membrane proteins associated with presenilin expression and gamma-secretase function.</title>
        <authorList>
            <person name="Araki W."/>
            <person name="Takahashi-Sasaki N."/>
            <person name="Chui D.H."/>
            <person name="Saito S."/>
            <person name="Takeda K."/>
            <person name="Shirotani K."/>
            <person name="Takahashi K."/>
            <person name="Murayama K.S."/>
            <person name="Kametani F."/>
            <person name="Shiraishi H."/>
            <person name="Komano H."/>
            <person name="Tabira T."/>
        </authorList>
    </citation>
    <scope>NUCLEOTIDE SEQUENCE [MRNA]</scope>
    <source>
        <tissue>Fetal brain</tissue>
    </source>
</reference>
<reference key="3">
    <citation type="journal article" date="2000" name="Genome Res.">
        <title>Cloning and functional analysis of cDNAs with open reading frames for 300 previously undefined genes expressed in CD34+ hematopoietic stem/progenitor cells.</title>
        <authorList>
            <person name="Zhang Q.-H."/>
            <person name="Ye M."/>
            <person name="Wu X.-Y."/>
            <person name="Ren S.-X."/>
            <person name="Zhao M."/>
            <person name="Zhao C.-J."/>
            <person name="Fu G."/>
            <person name="Shen Y."/>
            <person name="Fan H.-Y."/>
            <person name="Lu G."/>
            <person name="Zhong M."/>
            <person name="Xu X.-R."/>
            <person name="Han Z.-G."/>
            <person name="Zhang J.-W."/>
            <person name="Tao J."/>
            <person name="Huang Q.-H."/>
            <person name="Zhou J."/>
            <person name="Hu G.-X."/>
            <person name="Gu J."/>
            <person name="Chen S.-J."/>
            <person name="Chen Z."/>
        </authorList>
    </citation>
    <scope>NUCLEOTIDE SEQUENCE [LARGE SCALE MRNA]</scope>
    <source>
        <tissue>Umbilical cord blood</tissue>
    </source>
</reference>
<reference key="4">
    <citation type="submission" date="1999-07" db="EMBL/GenBank/DDBJ databases">
        <authorList>
            <person name="Zhao B."/>
            <person name="Tong Y.K."/>
            <person name="Xu H.S."/>
            <person name="Qin B.M."/>
            <person name="Liu Y.Q."/>
            <person name="Liu B."/>
            <person name="Wang X.Y."/>
            <person name="Zhang Q."/>
            <person name="Song L."/>
            <person name="Gao Y."/>
            <person name="Zhang C.L."/>
            <person name="Ye J."/>
            <person name="Ji X.J."/>
            <person name="Liu B.H."/>
            <person name="Lu H."/>
            <person name="Chen J.Z."/>
            <person name="Cai M.Q."/>
            <person name="Zheng W.Y."/>
            <person name="Teng C.Y."/>
            <person name="Liu Q."/>
            <person name="Yu L.T."/>
            <person name="Lin J."/>
            <person name="Gong Q."/>
            <person name="Zhang A.M."/>
            <person name="Gao R.L."/>
            <person name="Hui R.T."/>
        </authorList>
    </citation>
    <scope>NUCLEOTIDE SEQUENCE [LARGE SCALE MRNA]</scope>
    <source>
        <tissue>Aorta</tissue>
    </source>
</reference>
<reference key="5">
    <citation type="journal article" date="2004" name="Nat. Genet.">
        <title>Complete sequencing and characterization of 21,243 full-length human cDNAs.</title>
        <authorList>
            <person name="Ota T."/>
            <person name="Suzuki Y."/>
            <person name="Nishikawa T."/>
            <person name="Otsuki T."/>
            <person name="Sugiyama T."/>
            <person name="Irie R."/>
            <person name="Wakamatsu A."/>
            <person name="Hayashi K."/>
            <person name="Sato H."/>
            <person name="Nagai K."/>
            <person name="Kimura K."/>
            <person name="Makita H."/>
            <person name="Sekine M."/>
            <person name="Obayashi M."/>
            <person name="Nishi T."/>
            <person name="Shibahara T."/>
            <person name="Tanaka T."/>
            <person name="Ishii S."/>
            <person name="Yamamoto J."/>
            <person name="Saito K."/>
            <person name="Kawai Y."/>
            <person name="Isono Y."/>
            <person name="Nakamura Y."/>
            <person name="Nagahari K."/>
            <person name="Murakami K."/>
            <person name="Yasuda T."/>
            <person name="Iwayanagi T."/>
            <person name="Wagatsuma M."/>
            <person name="Shiratori A."/>
            <person name="Sudo H."/>
            <person name="Hosoiri T."/>
            <person name="Kaku Y."/>
            <person name="Kodaira H."/>
            <person name="Kondo H."/>
            <person name="Sugawara M."/>
            <person name="Takahashi M."/>
            <person name="Kanda K."/>
            <person name="Yokoi T."/>
            <person name="Furuya T."/>
            <person name="Kikkawa E."/>
            <person name="Omura Y."/>
            <person name="Abe K."/>
            <person name="Kamihara K."/>
            <person name="Katsuta N."/>
            <person name="Sato K."/>
            <person name="Tanikawa M."/>
            <person name="Yamazaki M."/>
            <person name="Ninomiya K."/>
            <person name="Ishibashi T."/>
            <person name="Yamashita H."/>
            <person name="Murakawa K."/>
            <person name="Fujimori K."/>
            <person name="Tanai H."/>
            <person name="Kimata M."/>
            <person name="Watanabe M."/>
            <person name="Hiraoka S."/>
            <person name="Chiba Y."/>
            <person name="Ishida S."/>
            <person name="Ono Y."/>
            <person name="Takiguchi S."/>
            <person name="Watanabe S."/>
            <person name="Yosida M."/>
            <person name="Hotuta T."/>
            <person name="Kusano J."/>
            <person name="Kanehori K."/>
            <person name="Takahashi-Fujii A."/>
            <person name="Hara H."/>
            <person name="Tanase T.-O."/>
            <person name="Nomura Y."/>
            <person name="Togiya S."/>
            <person name="Komai F."/>
            <person name="Hara R."/>
            <person name="Takeuchi K."/>
            <person name="Arita M."/>
            <person name="Imose N."/>
            <person name="Musashino K."/>
            <person name="Yuuki H."/>
            <person name="Oshima A."/>
            <person name="Sasaki N."/>
            <person name="Aotsuka S."/>
            <person name="Yoshikawa Y."/>
            <person name="Matsunawa H."/>
            <person name="Ichihara T."/>
            <person name="Shiohata N."/>
            <person name="Sano S."/>
            <person name="Moriya S."/>
            <person name="Momiyama H."/>
            <person name="Satoh N."/>
            <person name="Takami S."/>
            <person name="Terashima Y."/>
            <person name="Suzuki O."/>
            <person name="Nakagawa S."/>
            <person name="Senoh A."/>
            <person name="Mizoguchi H."/>
            <person name="Goto Y."/>
            <person name="Shimizu F."/>
            <person name="Wakebe H."/>
            <person name="Hishigaki H."/>
            <person name="Watanabe T."/>
            <person name="Sugiyama A."/>
            <person name="Takemoto M."/>
            <person name="Kawakami B."/>
            <person name="Yamazaki M."/>
            <person name="Watanabe K."/>
            <person name="Kumagai A."/>
            <person name="Itakura S."/>
            <person name="Fukuzumi Y."/>
            <person name="Fujimori Y."/>
            <person name="Komiyama M."/>
            <person name="Tashiro H."/>
            <person name="Tanigami A."/>
            <person name="Fujiwara T."/>
            <person name="Ono T."/>
            <person name="Yamada K."/>
            <person name="Fujii Y."/>
            <person name="Ozaki K."/>
            <person name="Hirao M."/>
            <person name="Ohmori Y."/>
            <person name="Kawabata A."/>
            <person name="Hikiji T."/>
            <person name="Kobatake N."/>
            <person name="Inagaki H."/>
            <person name="Ikema Y."/>
            <person name="Okamoto S."/>
            <person name="Okitani R."/>
            <person name="Kawakami T."/>
            <person name="Noguchi S."/>
            <person name="Itoh T."/>
            <person name="Shigeta K."/>
            <person name="Senba T."/>
            <person name="Matsumura K."/>
            <person name="Nakajima Y."/>
            <person name="Mizuno T."/>
            <person name="Morinaga M."/>
            <person name="Sasaki M."/>
            <person name="Togashi T."/>
            <person name="Oyama M."/>
            <person name="Hata H."/>
            <person name="Watanabe M."/>
            <person name="Komatsu T."/>
            <person name="Mizushima-Sugano J."/>
            <person name="Satoh T."/>
            <person name="Shirai Y."/>
            <person name="Takahashi Y."/>
            <person name="Nakagawa K."/>
            <person name="Okumura K."/>
            <person name="Nagase T."/>
            <person name="Nomura N."/>
            <person name="Kikuchi H."/>
            <person name="Masuho Y."/>
            <person name="Yamashita R."/>
            <person name="Nakai K."/>
            <person name="Yada T."/>
            <person name="Nakamura Y."/>
            <person name="Ohara O."/>
            <person name="Isogai T."/>
            <person name="Sugano S."/>
        </authorList>
    </citation>
    <scope>NUCLEOTIDE SEQUENCE [LARGE SCALE MRNA]</scope>
</reference>
<reference key="6">
    <citation type="submission" date="2005-04" db="EMBL/GenBank/DDBJ databases">
        <authorList>
            <person name="Suzuki Y."/>
            <person name="Sugano S."/>
            <person name="Totoki Y."/>
            <person name="Toyoda A."/>
            <person name="Takeda T."/>
            <person name="Sakaki Y."/>
            <person name="Tanaka A."/>
            <person name="Yokoyama S."/>
        </authorList>
    </citation>
    <scope>NUCLEOTIDE SEQUENCE [LARGE SCALE MRNA]</scope>
    <source>
        <tissue>Pancreas</tissue>
    </source>
</reference>
<reference key="7">
    <citation type="submission" date="2005-07" db="EMBL/GenBank/DDBJ databases">
        <authorList>
            <person name="Mural R.J."/>
            <person name="Istrail S."/>
            <person name="Sutton G.G."/>
            <person name="Florea L."/>
            <person name="Halpern A.L."/>
            <person name="Mobarry C.M."/>
            <person name="Lippert R."/>
            <person name="Walenz B."/>
            <person name="Shatkay H."/>
            <person name="Dew I."/>
            <person name="Miller J.R."/>
            <person name="Flanigan M.J."/>
            <person name="Edwards N.J."/>
            <person name="Bolanos R."/>
            <person name="Fasulo D."/>
            <person name="Halldorsson B.V."/>
            <person name="Hannenhalli S."/>
            <person name="Turner R."/>
            <person name="Yooseph S."/>
            <person name="Lu F."/>
            <person name="Nusskern D.R."/>
            <person name="Shue B.C."/>
            <person name="Zheng X.H."/>
            <person name="Zhong F."/>
            <person name="Delcher A.L."/>
            <person name="Huson D.H."/>
            <person name="Kravitz S.A."/>
            <person name="Mouchard L."/>
            <person name="Reinert K."/>
            <person name="Remington K.A."/>
            <person name="Clark A.G."/>
            <person name="Waterman M.S."/>
            <person name="Eichler E.E."/>
            <person name="Adams M.D."/>
            <person name="Hunkapiller M.W."/>
            <person name="Myers E.W."/>
            <person name="Venter J.C."/>
        </authorList>
    </citation>
    <scope>NUCLEOTIDE SEQUENCE [LARGE SCALE GENOMIC DNA]</scope>
</reference>
<reference key="8">
    <citation type="journal article" date="2004" name="Genome Res.">
        <title>The status, quality, and expansion of the NIH full-length cDNA project: the Mammalian Gene Collection (MGC).</title>
        <authorList>
            <consortium name="The MGC Project Team"/>
        </authorList>
    </citation>
    <scope>NUCLEOTIDE SEQUENCE [LARGE SCALE MRNA]</scope>
    <source>
        <tissue>Prostate</tissue>
    </source>
</reference>
<reference key="9">
    <citation type="journal article" date="2010" name="Nature">
        <title>Orm family proteins mediate sphingolipid homeostasis.</title>
        <authorList>
            <person name="Breslow D.K."/>
            <person name="Collins S.R."/>
            <person name="Bodenmiller B."/>
            <person name="Aebersold R."/>
            <person name="Simons K."/>
            <person name="Shevchenko A."/>
            <person name="Ejsing C.S."/>
            <person name="Weissman J.S."/>
        </authorList>
    </citation>
    <scope>FUNCTION</scope>
</reference>
<reference key="10">
    <citation type="journal article" date="2015" name="Proteomics">
        <title>N-terminome analysis of the human mitochondrial proteome.</title>
        <authorList>
            <person name="Vaca Jacome A.S."/>
            <person name="Rabilloud T."/>
            <person name="Schaeffer-Reiss C."/>
            <person name="Rompais M."/>
            <person name="Ayoub D."/>
            <person name="Lane L."/>
            <person name="Bairoch A."/>
            <person name="Van Dorsselaer A."/>
            <person name="Carapito C."/>
        </authorList>
    </citation>
    <scope>IDENTIFICATION BY MASS SPECTROMETRY [LARGE SCALE ANALYSIS]</scope>
</reference>
<keyword id="KW-0256">Endoplasmic reticulum</keyword>
<keyword id="KW-0472">Membrane</keyword>
<keyword id="KW-1267">Proteomics identification</keyword>
<keyword id="KW-1185">Reference proteome</keyword>
<keyword id="KW-0812">Transmembrane</keyword>
<keyword id="KW-1133">Transmembrane helix</keyword>
<organism>
    <name type="scientific">Homo sapiens</name>
    <name type="common">Human</name>
    <dbReference type="NCBI Taxonomy" id="9606"/>
    <lineage>
        <taxon>Eukaryota</taxon>
        <taxon>Metazoa</taxon>
        <taxon>Chordata</taxon>
        <taxon>Craniata</taxon>
        <taxon>Vertebrata</taxon>
        <taxon>Euteleostomi</taxon>
        <taxon>Mammalia</taxon>
        <taxon>Eutheria</taxon>
        <taxon>Euarchontoglires</taxon>
        <taxon>Primates</taxon>
        <taxon>Haplorrhini</taxon>
        <taxon>Catarrhini</taxon>
        <taxon>Hominidae</taxon>
        <taxon>Homo</taxon>
    </lineage>
</organism>
<proteinExistence type="evidence at protein level"/>
<protein>
    <recommendedName>
        <fullName>ORM1-like protein 2</fullName>
    </recommendedName>
    <alternativeName>
        <fullName>Adoplin-2</fullName>
    </alternativeName>
</protein>
<feature type="chain" id="PRO_0000215636" description="ORM1-like protein 2">
    <location>
        <begin position="1"/>
        <end position="153"/>
    </location>
</feature>
<feature type="topological domain" description="Cytoplasmic" evidence="2">
    <location>
        <begin position="1"/>
        <end position="21"/>
    </location>
</feature>
<feature type="transmembrane region" description="Helical" evidence="2">
    <location>
        <begin position="22"/>
        <end position="42"/>
    </location>
</feature>
<feature type="transmembrane region" description="Helical" evidence="2">
    <location>
        <begin position="43"/>
        <end position="63"/>
    </location>
</feature>
<feature type="topological domain" description="Cytoplasmic" evidence="2">
    <location>
        <begin position="64"/>
        <end position="105"/>
    </location>
</feature>
<feature type="transmembrane region" description="Helical" evidence="2">
    <location>
        <begin position="106"/>
        <end position="126"/>
    </location>
</feature>
<feature type="topological domain" description="Extracellular" evidence="2">
    <location>
        <begin position="127"/>
        <end position="153"/>
    </location>
</feature>
<feature type="sequence conflict" description="In Ref. 1; AAM43506." evidence="5" ref="1">
    <original>V</original>
    <variation>A</variation>
    <location>
        <position position="5"/>
    </location>
</feature>
<feature type="sequence conflict" description="In Ref. 6; BAD96900." evidence="5" ref="6">
    <original>S</original>
    <variation>N</variation>
    <location>
        <position position="8"/>
    </location>
</feature>
<feature type="sequence conflict" description="In Ref. 1; AAM43506." evidence="5" ref="1">
    <original>G</original>
    <variation>R</variation>
    <location>
        <position position="144"/>
    </location>
</feature>
<feature type="sequence conflict" description="In Ref. 4; AAQ13618." evidence="5" ref="4">
    <original>Y</original>
    <variation>F</variation>
    <location>
        <position position="153"/>
    </location>
</feature>
<evidence type="ECO:0000250" key="1">
    <source>
        <dbReference type="UniProtKB" id="Q8N138"/>
    </source>
</evidence>
<evidence type="ECO:0000255" key="2"/>
<evidence type="ECO:0000269" key="3">
    <source>
    </source>
</evidence>
<evidence type="ECO:0000269" key="4">
    <source>
    </source>
</evidence>
<evidence type="ECO:0000305" key="5"/>
<dbReference type="EMBL" id="AF395705">
    <property type="protein sequence ID" value="AAM43504.1"/>
    <property type="molecule type" value="mRNA"/>
</dbReference>
<dbReference type="EMBL" id="AF395706">
    <property type="protein sequence ID" value="AAM43505.1"/>
    <property type="molecule type" value="mRNA"/>
</dbReference>
<dbReference type="EMBL" id="AF395707">
    <property type="protein sequence ID" value="AAM43506.1"/>
    <property type="molecule type" value="mRNA"/>
</dbReference>
<dbReference type="EMBL" id="AB064961">
    <property type="protein sequence ID" value="BAC11712.1"/>
    <property type="molecule type" value="mRNA"/>
</dbReference>
<dbReference type="EMBL" id="AF161509">
    <property type="protein sequence ID" value="AAF29124.1"/>
    <property type="molecule type" value="mRNA"/>
</dbReference>
<dbReference type="EMBL" id="AF173375">
    <property type="protein sequence ID" value="AAQ13618.1"/>
    <property type="molecule type" value="mRNA"/>
</dbReference>
<dbReference type="EMBL" id="AK223180">
    <property type="protein sequence ID" value="BAD96900.1"/>
    <property type="molecule type" value="mRNA"/>
</dbReference>
<dbReference type="EMBL" id="AK314046">
    <property type="protein sequence ID" value="BAG36755.1"/>
    <property type="molecule type" value="mRNA"/>
</dbReference>
<dbReference type="EMBL" id="CH471054">
    <property type="protein sequence ID" value="EAW96840.1"/>
    <property type="molecule type" value="Genomic_DNA"/>
</dbReference>
<dbReference type="EMBL" id="BC012543">
    <property type="protein sequence ID" value="AAH12543.1"/>
    <property type="molecule type" value="mRNA"/>
</dbReference>
<dbReference type="CCDS" id="CCDS8893.1"/>
<dbReference type="RefSeq" id="NP_054901.1">
    <property type="nucleotide sequence ID" value="NM_014182.5"/>
</dbReference>
<dbReference type="SMR" id="Q53FV1"/>
<dbReference type="BioGRID" id="118864">
    <property type="interactions" value="64"/>
</dbReference>
<dbReference type="FunCoup" id="Q53FV1">
    <property type="interactions" value="1138"/>
</dbReference>
<dbReference type="IntAct" id="Q53FV1">
    <property type="interactions" value="41"/>
</dbReference>
<dbReference type="STRING" id="9606.ENSP00000243045"/>
<dbReference type="iPTMnet" id="Q53FV1"/>
<dbReference type="PhosphoSitePlus" id="Q53FV1"/>
<dbReference type="BioMuta" id="ORMDL2"/>
<dbReference type="DMDM" id="81174969"/>
<dbReference type="jPOST" id="Q53FV1"/>
<dbReference type="MassIVE" id="Q53FV1"/>
<dbReference type="PaxDb" id="9606-ENSP00000243045"/>
<dbReference type="PeptideAtlas" id="Q53FV1"/>
<dbReference type="ProteomicsDB" id="62469"/>
<dbReference type="Pumba" id="Q53FV1"/>
<dbReference type="TopDownProteomics" id="Q53FV1"/>
<dbReference type="Antibodypedia" id="53765">
    <property type="antibodies" value="78 antibodies from 16 providers"/>
</dbReference>
<dbReference type="DNASU" id="29095"/>
<dbReference type="Ensembl" id="ENST00000243045.10">
    <property type="protein sequence ID" value="ENSP00000243045.5"/>
    <property type="gene ID" value="ENSG00000123353.10"/>
</dbReference>
<dbReference type="Ensembl" id="ENST00000548974.1">
    <property type="protein sequence ID" value="ENSP00000448788.1"/>
    <property type="gene ID" value="ENSG00000123353.10"/>
</dbReference>
<dbReference type="GeneID" id="29095"/>
<dbReference type="KEGG" id="hsa:29095"/>
<dbReference type="MANE-Select" id="ENST00000243045.10">
    <property type="protein sequence ID" value="ENSP00000243045.5"/>
    <property type="RefSeq nucleotide sequence ID" value="NM_014182.5"/>
    <property type="RefSeq protein sequence ID" value="NP_054901.1"/>
</dbReference>
<dbReference type="UCSC" id="uc001shw.2">
    <property type="organism name" value="human"/>
</dbReference>
<dbReference type="AGR" id="HGNC:16037"/>
<dbReference type="CTD" id="29095"/>
<dbReference type="DisGeNET" id="29095"/>
<dbReference type="GeneCards" id="ORMDL2"/>
<dbReference type="HGNC" id="HGNC:16037">
    <property type="gene designation" value="ORMDL2"/>
</dbReference>
<dbReference type="HPA" id="ENSG00000123353">
    <property type="expression patterns" value="Low tissue specificity"/>
</dbReference>
<dbReference type="MIM" id="610074">
    <property type="type" value="gene"/>
</dbReference>
<dbReference type="neXtProt" id="NX_Q53FV1"/>
<dbReference type="OpenTargets" id="ENSG00000123353"/>
<dbReference type="PharmGKB" id="PA32820"/>
<dbReference type="VEuPathDB" id="HostDB:ENSG00000123353"/>
<dbReference type="eggNOG" id="KOG3319">
    <property type="taxonomic scope" value="Eukaryota"/>
</dbReference>
<dbReference type="GeneTree" id="ENSGT00950000183178"/>
<dbReference type="HOGENOM" id="CLU_072117_3_0_1"/>
<dbReference type="InParanoid" id="Q53FV1"/>
<dbReference type="OMA" id="TCEAYIS"/>
<dbReference type="OrthoDB" id="1932233at2759"/>
<dbReference type="PAN-GO" id="Q53FV1">
    <property type="GO annotations" value="4 GO annotations based on evolutionary models"/>
</dbReference>
<dbReference type="PhylomeDB" id="Q53FV1"/>
<dbReference type="TreeFam" id="TF323369"/>
<dbReference type="PathwayCommons" id="Q53FV1"/>
<dbReference type="Reactome" id="R-HSA-1660661">
    <property type="pathway name" value="Sphingolipid de novo biosynthesis"/>
</dbReference>
<dbReference type="SignaLink" id="Q53FV1"/>
<dbReference type="BioGRID-ORCS" id="29095">
    <property type="hits" value="17 hits in 1155 CRISPR screens"/>
</dbReference>
<dbReference type="ChiTaRS" id="ORMDL2">
    <property type="organism name" value="human"/>
</dbReference>
<dbReference type="GenomeRNAi" id="29095"/>
<dbReference type="Pharos" id="Q53FV1">
    <property type="development level" value="Tdark"/>
</dbReference>
<dbReference type="PRO" id="PR:Q53FV1"/>
<dbReference type="Proteomes" id="UP000005640">
    <property type="component" value="Chromosome 12"/>
</dbReference>
<dbReference type="RNAct" id="Q53FV1">
    <property type="molecule type" value="protein"/>
</dbReference>
<dbReference type="Bgee" id="ENSG00000123353">
    <property type="expression patterns" value="Expressed in islet of Langerhans and 188 other cell types or tissues"/>
</dbReference>
<dbReference type="ExpressionAtlas" id="Q53FV1">
    <property type="expression patterns" value="baseline and differential"/>
</dbReference>
<dbReference type="GO" id="GO:0005783">
    <property type="term" value="C:endoplasmic reticulum"/>
    <property type="evidence" value="ECO:0000314"/>
    <property type="project" value="UniProtKB"/>
</dbReference>
<dbReference type="GO" id="GO:0005789">
    <property type="term" value="C:endoplasmic reticulum membrane"/>
    <property type="evidence" value="ECO:0007669"/>
    <property type="project" value="UniProtKB-SubCell"/>
</dbReference>
<dbReference type="GO" id="GO:0017059">
    <property type="term" value="C:serine palmitoyltransferase complex"/>
    <property type="evidence" value="ECO:0000318"/>
    <property type="project" value="GO_Central"/>
</dbReference>
<dbReference type="GO" id="GO:0006672">
    <property type="term" value="P:ceramide metabolic process"/>
    <property type="evidence" value="ECO:0000315"/>
    <property type="project" value="UniProtKB"/>
</dbReference>
<dbReference type="GO" id="GO:0090156">
    <property type="term" value="P:intracellular sphingolipid homeostasis"/>
    <property type="evidence" value="ECO:0000318"/>
    <property type="project" value="GO_Central"/>
</dbReference>
<dbReference type="GO" id="GO:1900060">
    <property type="term" value="P:negative regulation of ceramide biosynthetic process"/>
    <property type="evidence" value="ECO:0000315"/>
    <property type="project" value="MGI"/>
</dbReference>
<dbReference type="GO" id="GO:0030148">
    <property type="term" value="P:sphingolipid biosynthetic process"/>
    <property type="evidence" value="ECO:0000318"/>
    <property type="project" value="GO_Central"/>
</dbReference>
<dbReference type="InterPro" id="IPR007203">
    <property type="entry name" value="ORMDL"/>
</dbReference>
<dbReference type="PANTHER" id="PTHR12665">
    <property type="entry name" value="ORMDL PROTEINS"/>
    <property type="match status" value="1"/>
</dbReference>
<dbReference type="Pfam" id="PF04061">
    <property type="entry name" value="ORMDL"/>
    <property type="match status" value="1"/>
</dbReference>
<dbReference type="PIRSF" id="PIRSF018147">
    <property type="entry name" value="ORMDL"/>
    <property type="match status" value="1"/>
</dbReference>